<keyword id="KW-0007">Acetylation</keyword>
<keyword id="KW-0025">Alternative splicing</keyword>
<keyword id="KW-0175">Coiled coil</keyword>
<keyword id="KW-0217">Developmental protein</keyword>
<keyword id="KW-0903">Direct protein sequencing</keyword>
<keyword id="KW-0403">Intermediate filament</keyword>
<keyword id="KW-1017">Isopeptide bond</keyword>
<keyword id="KW-0524">Neurogenesis</keyword>
<keyword id="KW-0597">Phosphoprotein</keyword>
<keyword id="KW-1185">Reference proteome</keyword>
<keyword id="KW-0832">Ubl conjugation</keyword>
<dbReference type="EMBL" id="M34384">
    <property type="protein sequence ID" value="AAA41685.1"/>
    <property type="molecule type" value="mRNA"/>
</dbReference>
<dbReference type="EMBL" id="AF538924">
    <property type="protein sequence ID" value="AAN33053.1"/>
    <property type="molecule type" value="mRNA"/>
</dbReference>
<dbReference type="PIR" id="A34736">
    <property type="entry name" value="A34736"/>
</dbReference>
<dbReference type="SMR" id="P21263"/>
<dbReference type="FunCoup" id="P21263">
    <property type="interactions" value="183"/>
</dbReference>
<dbReference type="IntAct" id="P21263">
    <property type="interactions" value="5"/>
</dbReference>
<dbReference type="MINT" id="P21263"/>
<dbReference type="STRING" id="10116.ENSRNOP00000025314"/>
<dbReference type="iPTMnet" id="P21263"/>
<dbReference type="PhosphoSitePlus" id="P21263"/>
<dbReference type="PaxDb" id="10116-ENSRNOP00000025314"/>
<dbReference type="UCSC" id="RGD:3162">
    <molecule id="P21263-1"/>
    <property type="organism name" value="rat"/>
</dbReference>
<dbReference type="AGR" id="RGD:3162"/>
<dbReference type="RGD" id="3162">
    <property type="gene designation" value="Nes"/>
</dbReference>
<dbReference type="eggNOG" id="ENOG502RYFK">
    <property type="taxonomic scope" value="Eukaryota"/>
</dbReference>
<dbReference type="InParanoid" id="P21263"/>
<dbReference type="PhylomeDB" id="P21263"/>
<dbReference type="PRO" id="PR:P21263"/>
<dbReference type="Proteomes" id="UP000002494">
    <property type="component" value="Unplaced"/>
</dbReference>
<dbReference type="GO" id="GO:0005737">
    <property type="term" value="C:cytoplasm"/>
    <property type="evidence" value="ECO:0000266"/>
    <property type="project" value="RGD"/>
</dbReference>
<dbReference type="GO" id="GO:0005882">
    <property type="term" value="C:intermediate filament"/>
    <property type="evidence" value="ECO:0000314"/>
    <property type="project" value="RGD"/>
</dbReference>
<dbReference type="GO" id="GO:0031730">
    <property type="term" value="F:CCR5 chemokine receptor binding"/>
    <property type="evidence" value="ECO:0000353"/>
    <property type="project" value="RGD"/>
</dbReference>
<dbReference type="GO" id="GO:0019215">
    <property type="term" value="F:intermediate filament binding"/>
    <property type="evidence" value="ECO:0000250"/>
    <property type="project" value="UniProtKB"/>
</dbReference>
<dbReference type="GO" id="GO:0007420">
    <property type="term" value="P:brain development"/>
    <property type="evidence" value="ECO:0000250"/>
    <property type="project" value="UniProtKB"/>
</dbReference>
<dbReference type="GO" id="GO:0048858">
    <property type="term" value="P:cell projection morphogenesis"/>
    <property type="evidence" value="ECO:0000266"/>
    <property type="project" value="RGD"/>
</dbReference>
<dbReference type="GO" id="GO:0031076">
    <property type="term" value="P:embryonic camera-type eye development"/>
    <property type="evidence" value="ECO:0000250"/>
    <property type="project" value="UniProtKB"/>
</dbReference>
<dbReference type="GO" id="GO:0000086">
    <property type="term" value="P:G2/M transition of mitotic cell cycle"/>
    <property type="evidence" value="ECO:0000266"/>
    <property type="project" value="RGD"/>
</dbReference>
<dbReference type="GO" id="GO:0043524">
    <property type="term" value="P:negative regulation of neuron apoptotic process"/>
    <property type="evidence" value="ECO:0000266"/>
    <property type="project" value="RGD"/>
</dbReference>
<dbReference type="GO" id="GO:0007399">
    <property type="term" value="P:nervous system development"/>
    <property type="evidence" value="ECO:0000266"/>
    <property type="project" value="RGD"/>
</dbReference>
<dbReference type="GO" id="GO:0051402">
    <property type="term" value="P:neuron apoptotic process"/>
    <property type="evidence" value="ECO:0000266"/>
    <property type="project" value="RGD"/>
</dbReference>
<dbReference type="GO" id="GO:0030182">
    <property type="term" value="P:neuron differentiation"/>
    <property type="evidence" value="ECO:0000303"/>
    <property type="project" value="RGD"/>
</dbReference>
<dbReference type="GO" id="GO:0030844">
    <property type="term" value="P:positive regulation of intermediate filament depolymerization"/>
    <property type="evidence" value="ECO:0000314"/>
    <property type="project" value="UniProtKB"/>
</dbReference>
<dbReference type="GO" id="GO:2000179">
    <property type="term" value="P:positive regulation of neural precursor cell proliferation"/>
    <property type="evidence" value="ECO:0000315"/>
    <property type="project" value="UniProtKB"/>
</dbReference>
<dbReference type="GO" id="GO:0010212">
    <property type="term" value="P:response to ionizing radiation"/>
    <property type="evidence" value="ECO:0000270"/>
    <property type="project" value="RGD"/>
</dbReference>
<dbReference type="GO" id="GO:0031667">
    <property type="term" value="P:response to nutrient levels"/>
    <property type="evidence" value="ECO:0000270"/>
    <property type="project" value="RGD"/>
</dbReference>
<dbReference type="GO" id="GO:0009410">
    <property type="term" value="P:response to xenobiotic stimulus"/>
    <property type="evidence" value="ECO:0000270"/>
    <property type="project" value="RGD"/>
</dbReference>
<dbReference type="GO" id="GO:0072089">
    <property type="term" value="P:stem cell proliferation"/>
    <property type="evidence" value="ECO:0000266"/>
    <property type="project" value="RGD"/>
</dbReference>
<dbReference type="FunFam" id="1.20.5.170:FF:000081">
    <property type="entry name" value="Nestin"/>
    <property type="match status" value="1"/>
</dbReference>
<dbReference type="Gene3D" id="1.20.5.170">
    <property type="match status" value="1"/>
</dbReference>
<dbReference type="Gene3D" id="1.20.5.1160">
    <property type="entry name" value="Vasodilator-stimulated phosphoprotein"/>
    <property type="match status" value="1"/>
</dbReference>
<dbReference type="InterPro" id="IPR018039">
    <property type="entry name" value="IF_conserved"/>
</dbReference>
<dbReference type="InterPro" id="IPR039008">
    <property type="entry name" value="IF_rod_dom"/>
</dbReference>
<dbReference type="InterPro" id="IPR031211">
    <property type="entry name" value="Nestin"/>
</dbReference>
<dbReference type="PANTHER" id="PTHR47051">
    <property type="entry name" value="NESTIN"/>
    <property type="match status" value="1"/>
</dbReference>
<dbReference type="PANTHER" id="PTHR47051:SF1">
    <property type="entry name" value="NESTIN"/>
    <property type="match status" value="1"/>
</dbReference>
<dbReference type="Pfam" id="PF00038">
    <property type="entry name" value="Filament"/>
    <property type="match status" value="2"/>
</dbReference>
<dbReference type="SMART" id="SM01391">
    <property type="entry name" value="Filament"/>
    <property type="match status" value="1"/>
</dbReference>
<dbReference type="SUPFAM" id="SSF64593">
    <property type="entry name" value="Intermediate filament protein, coiled coil region"/>
    <property type="match status" value="2"/>
</dbReference>
<dbReference type="PROSITE" id="PS00226">
    <property type="entry name" value="IF_ROD_1"/>
    <property type="match status" value="1"/>
</dbReference>
<dbReference type="PROSITE" id="PS51842">
    <property type="entry name" value="IF_ROD_2"/>
    <property type="match status" value="1"/>
</dbReference>
<accession>P21263</accession>
<accession>Q8CJ14</accession>
<organism>
    <name type="scientific">Rattus norvegicus</name>
    <name type="common">Rat</name>
    <dbReference type="NCBI Taxonomy" id="10116"/>
    <lineage>
        <taxon>Eukaryota</taxon>
        <taxon>Metazoa</taxon>
        <taxon>Chordata</taxon>
        <taxon>Craniata</taxon>
        <taxon>Vertebrata</taxon>
        <taxon>Euteleostomi</taxon>
        <taxon>Mammalia</taxon>
        <taxon>Eutheria</taxon>
        <taxon>Euarchontoglires</taxon>
        <taxon>Glires</taxon>
        <taxon>Rodentia</taxon>
        <taxon>Myomorpha</taxon>
        <taxon>Muroidea</taxon>
        <taxon>Muridae</taxon>
        <taxon>Murinae</taxon>
        <taxon>Rattus</taxon>
    </lineage>
</organism>
<name>NEST_RAT</name>
<sequence length="1893" mass="208797">MEGCVGEESFQMWELNRRLEAYLTRVKTLEEQNQLLSAELGGLRAQSGDTSWRARADDELASLRILVDQRWREKLEAEVQRDNLAEELESVAGRCQQVRLARERTVQEAACSRRALEAEKNARGWLSTQAAELERELEALRAAHEEERAHLNAQAACAPRRPPAPPHGSPVRAPEVEDLARRLGEVWRGAVRDYQERVAHMESSLGQARERLSQAVRGARECRLEVQQLQADRDSLQERREALEQRLEGRWQDRLQATDKFQLAVEALEQEKQGLQSQIAQILEGGQQLAHLKMSLSLEVATYRTLLEAENSRLQTPGRGSQASLGFLDPKLKPNFLGIPEDQYLGSVLPALSPTSFPSPLPNTLETPVTAFLKTQEFLQARTPTLASTPIPPISEAPCPPNAEVRAQEVPLSLLQTQAPEPLWAEATVPSSSAILPELEEPGGKQQGHFPDDLTSLATTLNPHHPTLEAKDGESSGSRVSSIFQEDEGQIWELVEKEADIEVKVENSSAQKTQESGLDTEETQDSQGPLQKETLKALGEEPLMSLKIQNYETAGKENCNSSTEGHLGTLEGPEKEKQIPLKSLEEKNVESEKTLENGVPVLSELLGKEDTRTEDQELMSPKGTLKRFSSLGKESQEVVRPSKEGNLESWTAFKEESQHPLGFPGAEDQMLERLVEKEDQSFPRSPEEEDQEACRPLQKENQEPLGYEEAEGQILERLIEKESQESLRSPEEEDQEAGRSLQKGNQEPLGYEEAEGQILERLIEKESQESLRSAEEEDQEACRSLQKENQEPLGYEEAEDQILERLIEKESQESLRSPEEEDQEAGRSLQKENQEPLGYEEAEDQMLERLIEKESQESLKSPEENQRIGKPLERENQKSLRYLEENQETFVPLESRNQRPLRSLEVEEEEQRIVKPLEKVSQDSLGSLAEENVQPLRYLEEDNCINKSLLEDKTHKSLGSLEDRNGDSIIIPQESETQVSLRPPEEEDQRIVNHLEKESQEFSRSSEEEERVMERSLEGENHESLSSVEKEDQMVESQLEKESQDSGKSLEDESQETFGPLEKENAESLRSLAGQDQEEQKLEQETQQTLRAVGNEQMAVSPPEKVDPELPKPLGNDQEIARSLGKENQESLVSLKEKGIETVKSLETEIIEPLETAEEDLERRKSIDTQEPLWSTEVARETVEPPEDEPPGSLGSVDENRETLTSLEKESQELSSLGKWNVETRVEDSQQCLQVEEGLQEEQHQESLREVKQELPSSGNQQRWEDVVEGKAVGQEAPLATTGVGTEDKAELHLRGQGGEEEAAAEGELLQDIVGEAWSLGSSEPKEQRVPAEALDNLEGGALEVPVAQSMPEVTERDEDRAQAGEQDSIEVTLGLEAARTGLELEQEVVGLEDPRHFAREEAIPPSLGEESVKAKIAQGLEGPGKEPKEAGALDSGILELPKTSSEALECQGHEESESMEGWEEEEASLETSDHEGSDAPQPRPPETEEDEGAQAALTAPGPKLLEPCSPIPILTDAHELQPQAEGIQEAGWQPEAGSEALERVENEPEFGLGEIPEGLQDWEEGREESEADDLGETLPDSTPLGLYLRSPASPKWDLAGEQRLSPQGDAGKEDWGPAVPAAQGLSGPPEEEEEQGHGSDLSSEEFEDLGTEASLLPGVPKEVADHVGQVPPVLQPACWDQGGESDGFADEEESGEEGEEEDADEEGAESGAQWWGSGASGGGCKVQDIAQRGDPVQESVGVSGLWDDGLRGAAANVPALEMVSQDSAEPSGSEESESASLEGEEGQVTDHLDAPQEVTSMVPGVGDAFDIGGQSPNLDSEQVNGKMENGLEQAEGQVVLDGDEDQELLLQGQEVGALKVPLVASPVHLGPSQPLKFTLSGVDGDSWSSGED</sequence>
<reference key="1">
    <citation type="journal article" date="1990" name="Cell">
        <title>CNS stem cells express a new class of intermediate filament protein.</title>
        <authorList>
            <person name="Lendahl U."/>
            <person name="Zimmerman L.B."/>
            <person name="McKay R.D.G."/>
        </authorList>
    </citation>
    <scope>NUCLEOTIDE SEQUENCE [MRNA] (ISOFORM 2)</scope>
</reference>
<reference key="2">
    <citation type="journal article" date="2003" name="Mol. Biol. Cell">
        <title>Nestin promotes the phosphorylation-dependent disassembly of vimentin intermediate filaments during mitosis.</title>
        <authorList>
            <person name="Chou Y.-H."/>
            <person name="Khuon S."/>
            <person name="Herrmann H."/>
            <person name="Goldman R.D."/>
        </authorList>
    </citation>
    <scope>NUCLEOTIDE SEQUENCE [MRNA] (ISOFORM 1)</scope>
    <scope>FUNCTION</scope>
    <source>
        <tissue>Glial tumor</tissue>
    </source>
</reference>
<reference key="3">
    <citation type="journal article" date="2001" name="J. Biol. Chem.">
        <title>Mitotic reorganization of the intermediate filament protein nestin involves phosphorylation by cdc2 kinase.</title>
        <authorList>
            <person name="Sahlgren C.M."/>
            <person name="Mikhailov A."/>
            <person name="Hellman J."/>
            <person name="Chou Y.H."/>
            <person name="Lendahl U."/>
            <person name="Goldman R.D."/>
            <person name="Eriksson J.E."/>
        </authorList>
    </citation>
    <scope>PROTEIN SEQUENCE OF 314-319</scope>
    <scope>PHOSPHORYLATION AT THR-316</scope>
</reference>
<reference key="4">
    <citation type="journal article" date="2005" name="Genes Cells">
        <title>Fhos2, a novel formin-related actin-organizing protein, probably associates with the nestin intermediate filament.</title>
        <authorList>
            <person name="Kanaya H."/>
            <person name="Takeya R."/>
            <person name="Takeuchi K."/>
            <person name="Watanabe N."/>
            <person name="Jing N."/>
            <person name="Sumimoto H."/>
        </authorList>
    </citation>
    <scope>INTERACTION WITH FHOD3</scope>
</reference>
<reference key="5">
    <citation type="journal article" date="2010" name="Mol. Cell. Neurosci.">
        <title>Nestin is essential for mitogen-stimulated proliferation of neural progenitor cells.</title>
        <authorList>
            <person name="Xue X.J."/>
            <person name="Yuan X.B."/>
        </authorList>
    </citation>
    <scope>FUNCTION</scope>
    <source>
        <strain>Sprague-Dawley</strain>
    </source>
</reference>
<reference key="6">
    <citation type="journal article" date="2012" name="Nat. Commun.">
        <title>Quantitative maps of protein phosphorylation sites across 14 different rat organs and tissues.</title>
        <authorList>
            <person name="Lundby A."/>
            <person name="Secher A."/>
            <person name="Lage K."/>
            <person name="Nordsborg N.B."/>
            <person name="Dmytriyev A."/>
            <person name="Lundby C."/>
            <person name="Olsen J.V."/>
        </authorList>
    </citation>
    <scope>PHOSPHORYLATION [LARGE SCALE ANALYSIS] AT SER-620; SER-729; SER-817; SER-1049; SER-1166; SER-1594; SER-1866; SER-1889 AND SER-1890</scope>
    <scope>IDENTIFICATION BY MASS SPECTROMETRY [LARGE SCALE ANALYSIS]</scope>
</reference>
<protein>
    <recommendedName>
        <fullName>Nestin</fullName>
    </recommendedName>
</protein>
<proteinExistence type="evidence at protein level"/>
<feature type="chain" id="PRO_0000063854" description="Nestin">
    <location>
        <begin position="1"/>
        <end position="1893"/>
    </location>
</feature>
<feature type="domain" description="IF rod" evidence="4">
    <location>
        <begin position="8"/>
        <end position="314"/>
    </location>
</feature>
<feature type="region of interest" description="Head">
    <location>
        <begin position="1"/>
        <end position="7"/>
    </location>
</feature>
<feature type="region of interest" description="Coil 1A">
    <location>
        <begin position="8"/>
        <end position="43"/>
    </location>
</feature>
<feature type="region of interest" description="Linker 1">
    <location>
        <begin position="44"/>
        <end position="55"/>
    </location>
</feature>
<feature type="region of interest" description="Coil 1B">
    <location>
        <begin position="56"/>
        <end position="151"/>
    </location>
</feature>
<feature type="region of interest" description="Disordered" evidence="5">
    <location>
        <begin position="150"/>
        <end position="172"/>
    </location>
</feature>
<feature type="region of interest" description="Linker 12">
    <location>
        <begin position="152"/>
        <end position="174"/>
    </location>
</feature>
<feature type="region of interest" description="Coil 2A">
    <location>
        <begin position="175"/>
        <end position="193"/>
    </location>
</feature>
<feature type="region of interest" description="Linker 2">
    <location>
        <begin position="194"/>
        <end position="196"/>
    </location>
</feature>
<feature type="region of interest" description="Coil 2B">
    <location>
        <begin position="197"/>
        <end position="314"/>
    </location>
</feature>
<feature type="region of interest" description="Tail">
    <location>
        <begin position="315"/>
        <end position="1893"/>
    </location>
</feature>
<feature type="region of interest" description="Disordered" evidence="5">
    <location>
        <begin position="437"/>
        <end position="479"/>
    </location>
</feature>
<feature type="region of interest" description="Disordered" evidence="5">
    <location>
        <begin position="507"/>
        <end position="529"/>
    </location>
</feature>
<feature type="region of interest" description="Disordered" evidence="5">
    <location>
        <begin position="556"/>
        <end position="879"/>
    </location>
</feature>
<feature type="region of interest" description="Disordered" evidence="5">
    <location>
        <begin position="949"/>
        <end position="1130"/>
    </location>
</feature>
<feature type="region of interest" description="Disordered" evidence="5">
    <location>
        <begin position="1155"/>
        <end position="1222"/>
    </location>
</feature>
<feature type="region of interest" description="Disordered" evidence="5">
    <location>
        <begin position="1237"/>
        <end position="1263"/>
    </location>
</feature>
<feature type="region of interest" description="Disordered" evidence="5">
    <location>
        <begin position="1336"/>
        <end position="1369"/>
    </location>
</feature>
<feature type="region of interest" description="Disordered" evidence="5">
    <location>
        <begin position="1388"/>
        <end position="1824"/>
    </location>
</feature>
<feature type="region of interest" description="Disordered" evidence="5">
    <location>
        <begin position="1870"/>
        <end position="1893"/>
    </location>
</feature>
<feature type="compositionally biased region" description="Polar residues" evidence="5">
    <location>
        <begin position="507"/>
        <end position="517"/>
    </location>
</feature>
<feature type="compositionally biased region" description="Basic and acidic residues" evidence="5">
    <location>
        <begin position="572"/>
        <end position="595"/>
    </location>
</feature>
<feature type="compositionally biased region" description="Basic and acidic residues" evidence="5">
    <location>
        <begin position="606"/>
        <end position="615"/>
    </location>
</feature>
<feature type="compositionally biased region" description="Basic and acidic residues" evidence="5">
    <location>
        <begin position="634"/>
        <end position="646"/>
    </location>
</feature>
<feature type="compositionally biased region" description="Basic and acidic residues" evidence="5">
    <location>
        <begin position="670"/>
        <end position="681"/>
    </location>
</feature>
<feature type="compositionally biased region" description="Basic and acidic residues" evidence="5">
    <location>
        <begin position="717"/>
        <end position="730"/>
    </location>
</feature>
<feature type="compositionally biased region" description="Basic and acidic residues" evidence="5">
    <location>
        <begin position="761"/>
        <end position="774"/>
    </location>
</feature>
<feature type="compositionally biased region" description="Basic and acidic residues" evidence="5">
    <location>
        <begin position="802"/>
        <end position="818"/>
    </location>
</feature>
<feature type="compositionally biased region" description="Basic and acidic residues" evidence="5">
    <location>
        <begin position="846"/>
        <end position="879"/>
    </location>
</feature>
<feature type="compositionally biased region" description="Basic and acidic residues" evidence="5">
    <location>
        <begin position="949"/>
        <end position="966"/>
    </location>
</feature>
<feature type="compositionally biased region" description="Basic and acidic residues" evidence="5">
    <location>
        <begin position="989"/>
        <end position="1051"/>
    </location>
</feature>
<feature type="compositionally biased region" description="Basic and acidic residues" evidence="5">
    <location>
        <begin position="1198"/>
        <end position="1212"/>
    </location>
</feature>
<feature type="compositionally biased region" description="Basic and acidic residues" evidence="5">
    <location>
        <begin position="1241"/>
        <end position="1253"/>
    </location>
</feature>
<feature type="compositionally biased region" description="Basic and acidic residues" evidence="5">
    <location>
        <begin position="1354"/>
        <end position="1363"/>
    </location>
</feature>
<feature type="compositionally biased region" description="Basic and acidic residues" evidence="5">
    <location>
        <begin position="1393"/>
        <end position="1403"/>
    </location>
</feature>
<feature type="compositionally biased region" description="Acidic residues" evidence="5">
    <location>
        <begin position="1458"/>
        <end position="1469"/>
    </location>
</feature>
<feature type="compositionally biased region" description="Acidic residues" evidence="5">
    <location>
        <begin position="1561"/>
        <end position="1576"/>
    </location>
</feature>
<feature type="compositionally biased region" description="Acidic residues" evidence="5">
    <location>
        <begin position="1688"/>
        <end position="1709"/>
    </location>
</feature>
<feature type="compositionally biased region" description="Acidic residues" evidence="5">
    <location>
        <begin position="1773"/>
        <end position="1788"/>
    </location>
</feature>
<feature type="compositionally biased region" description="Polar residues" evidence="5">
    <location>
        <begin position="1815"/>
        <end position="1824"/>
    </location>
</feature>
<feature type="modified residue" description="N-acetylmethionine" evidence="2">
    <location>
        <position position="1"/>
    </location>
</feature>
<feature type="modified residue" description="Phosphoserine" evidence="2">
    <location>
        <position position="312"/>
    </location>
</feature>
<feature type="modified residue" description="Phosphothreonine" evidence="6">
    <location>
        <position position="316"/>
    </location>
</feature>
<feature type="modified residue" description="Phosphoserine" evidence="2">
    <location>
        <position position="356"/>
    </location>
</feature>
<feature type="modified residue" description="Phosphoserine" evidence="2">
    <location>
        <position position="359"/>
    </location>
</feature>
<feature type="modified residue" description="Phosphothreonine" evidence="2">
    <location>
        <position position="389"/>
    </location>
</feature>
<feature type="modified residue" description="Phosphoserine" evidence="2">
    <location>
        <position position="562"/>
    </location>
</feature>
<feature type="modified residue" description="Phosphoserine" evidence="12">
    <location>
        <position position="620"/>
    </location>
</feature>
<feature type="modified residue" description="Phosphoserine" evidence="2">
    <location>
        <position position="685"/>
    </location>
</feature>
<feature type="modified residue" description="Phosphoserine" evidence="12">
    <location>
        <position position="729"/>
    </location>
</feature>
<feature type="modified residue" description="Phosphoserine" evidence="12">
    <location>
        <position position="817"/>
    </location>
</feature>
<feature type="modified residue" description="Phosphoserine" evidence="3">
    <location>
        <position position="903"/>
    </location>
</feature>
<feature type="modified residue" description="Phosphoserine" evidence="3">
    <location>
        <position position="1005"/>
    </location>
</feature>
<feature type="modified residue" description="Phosphoserine" evidence="12">
    <location>
        <position position="1049"/>
    </location>
</feature>
<feature type="modified residue" description="Phosphoserine" evidence="2">
    <location>
        <position position="1145"/>
    </location>
</feature>
<feature type="modified residue" description="Phosphoserine" evidence="12">
    <location>
        <position position="1166"/>
    </location>
</feature>
<feature type="modified residue" description="Phosphoserine" evidence="2">
    <location>
        <position position="1216"/>
    </location>
</feature>
<feature type="modified residue" description="Phosphoserine" evidence="2">
    <location>
        <position position="1229"/>
    </location>
</feature>
<feature type="modified residue" description="Phosphoserine" evidence="2">
    <location>
        <position position="1322"/>
    </location>
</feature>
<feature type="modified residue" description="Phosphoserine" evidence="2">
    <location>
        <position position="1570"/>
    </location>
</feature>
<feature type="modified residue" description="Phosphoserine" evidence="12">
    <location>
        <position position="1594"/>
    </location>
</feature>
<feature type="modified residue" description="Phosphoserine" evidence="2">
    <location>
        <position position="1686"/>
    </location>
</feature>
<feature type="modified residue" description="Phosphoserine" evidence="2">
    <location>
        <position position="1695"/>
    </location>
</feature>
<feature type="modified residue" description="Phosphoserine" evidence="2">
    <location>
        <position position="1772"/>
    </location>
</feature>
<feature type="modified residue" description="Phosphoserine" evidence="2">
    <location>
        <position position="1774"/>
    </location>
</feature>
<feature type="modified residue" description="Phosphoserine" evidence="12">
    <location>
        <position position="1866"/>
    </location>
</feature>
<feature type="modified residue" description="Phosphoserine" evidence="12">
    <location>
        <position position="1889"/>
    </location>
</feature>
<feature type="modified residue" description="Phosphoserine" evidence="12">
    <location>
        <position position="1890"/>
    </location>
</feature>
<feature type="cross-link" description="Glycyl lysine isopeptide (Lys-Gly) (interchain with G-Cter in SUMO1); alternate" evidence="2">
    <location>
        <position position="1136"/>
    </location>
</feature>
<feature type="cross-link" description="Glycyl lysine isopeptide (Lys-Gly) (interchain with G-Cter in SUMO2); alternate" evidence="2">
    <location>
        <position position="1136"/>
    </location>
</feature>
<feature type="splice variant" id="VSP_024924" description="In isoform 2." evidence="10">
    <location>
        <begin position="736"/>
        <end position="823"/>
    </location>
</feature>
<feature type="sequence conflict" description="In Ref. 1; AAA41685." evidence="11" ref="1">
    <original>GSPVR</original>
    <variation>RIPGP</variation>
    <location>
        <begin position="168"/>
        <end position="172"/>
    </location>
</feature>
<feature type="sequence conflict" description="In Ref. 1; AAA41685." evidence="11" ref="1">
    <original>AE</original>
    <variation>LK</variation>
    <location>
        <begin position="425"/>
        <end position="426"/>
    </location>
</feature>
<feature type="sequence conflict" description="In Ref. 1; AAA41685." evidence="11" ref="1">
    <original>T</original>
    <variation>N</variation>
    <location>
        <position position="460"/>
    </location>
</feature>
<feature type="sequence conflict" description="In Ref. 1; AAA41685." evidence="11" ref="1">
    <original>G</original>
    <variation>E</variation>
    <location>
        <position position="477"/>
    </location>
</feature>
<feature type="sequence conflict" description="In Ref. 1; AAA41685." evidence="11" ref="1">
    <original>N</original>
    <variation>D</variation>
    <location>
        <position position="943"/>
    </location>
</feature>
<feature type="sequence conflict" description="In Ref. 1; AAA41685." evidence="11" ref="1">
    <original>R</original>
    <variation>Q</variation>
    <location>
        <position position="1011"/>
    </location>
</feature>
<comment type="function">
    <text evidence="1 7 9">Required for brain and eye development (By similarity). Promotes the disassembly of phosphorylated vimentin intermediate filaments (IF) during mitosis and may play a role in the trafficking and distribution of IF proteins and other cellular factors to daughter cells during progenitor cell division. Required for survival, renewal and mitogen-stimulated proliferation of neural progenitor cells.</text>
</comment>
<comment type="subunit">
    <text evidence="1 8">Forms homodimers and homotetramers in vitro. In mixtures with other intermediate filament proteins such as vimentin and alpha-internexin, this protein preferentially forms heterodimers which can assemble to form intermediate filaments if nestin does not exceed 25% (By similarity). Interacts with FHOD3.</text>
</comment>
<comment type="alternative products">
    <event type="alternative splicing"/>
    <isoform>
        <id>P21263-1</id>
        <name>1</name>
        <sequence type="displayed"/>
    </isoform>
    <isoform>
        <id>P21263-2</id>
        <name>2</name>
        <sequence type="described" ref="VSP_024924"/>
    </isoform>
</comment>
<comment type="tissue specificity">
    <text>CNS stem cells.</text>
</comment>
<comment type="developmental stage">
    <text>Upon terminal neural differentiation, nestin is down-regulated and replaced by neurofilaments.</text>
</comment>
<comment type="PTM">
    <text evidence="6">Constitutively phosphorylated. This increases during mitosis when the cytoplasmic intermediate filament network is reorganized.</text>
</comment>
<comment type="similarity">
    <text evidence="4">Belongs to the intermediate filament family.</text>
</comment>
<evidence type="ECO:0000250" key="1"/>
<evidence type="ECO:0000250" key="2">
    <source>
        <dbReference type="UniProtKB" id="P48681"/>
    </source>
</evidence>
<evidence type="ECO:0000250" key="3">
    <source>
        <dbReference type="UniProtKB" id="Q6P5H2"/>
    </source>
</evidence>
<evidence type="ECO:0000255" key="4">
    <source>
        <dbReference type="PROSITE-ProRule" id="PRU01188"/>
    </source>
</evidence>
<evidence type="ECO:0000256" key="5">
    <source>
        <dbReference type="SAM" id="MobiDB-lite"/>
    </source>
</evidence>
<evidence type="ECO:0000269" key="6">
    <source>
    </source>
</evidence>
<evidence type="ECO:0000269" key="7">
    <source>
    </source>
</evidence>
<evidence type="ECO:0000269" key="8">
    <source>
    </source>
</evidence>
<evidence type="ECO:0000269" key="9">
    <source>
    </source>
</evidence>
<evidence type="ECO:0000303" key="10">
    <source>
    </source>
</evidence>
<evidence type="ECO:0000305" key="11"/>
<evidence type="ECO:0007744" key="12">
    <source>
    </source>
</evidence>
<gene>
    <name type="primary">Nes</name>
</gene>